<reference key="1">
    <citation type="journal article" date="2003" name="Nat. Genet.">
        <title>Comparative analysis of the genome sequences of Bordetella pertussis, Bordetella parapertussis and Bordetella bronchiseptica.</title>
        <authorList>
            <person name="Parkhill J."/>
            <person name="Sebaihia M."/>
            <person name="Preston A."/>
            <person name="Murphy L.D."/>
            <person name="Thomson N.R."/>
            <person name="Harris D.E."/>
            <person name="Holden M.T.G."/>
            <person name="Churcher C.M."/>
            <person name="Bentley S.D."/>
            <person name="Mungall K.L."/>
            <person name="Cerdeno-Tarraga A.-M."/>
            <person name="Temple L."/>
            <person name="James K.D."/>
            <person name="Harris B."/>
            <person name="Quail M.A."/>
            <person name="Achtman M."/>
            <person name="Atkin R."/>
            <person name="Baker S."/>
            <person name="Basham D."/>
            <person name="Bason N."/>
            <person name="Cherevach I."/>
            <person name="Chillingworth T."/>
            <person name="Collins M."/>
            <person name="Cronin A."/>
            <person name="Davis P."/>
            <person name="Doggett J."/>
            <person name="Feltwell T."/>
            <person name="Goble A."/>
            <person name="Hamlin N."/>
            <person name="Hauser H."/>
            <person name="Holroyd S."/>
            <person name="Jagels K."/>
            <person name="Leather S."/>
            <person name="Moule S."/>
            <person name="Norberczak H."/>
            <person name="O'Neil S."/>
            <person name="Ormond D."/>
            <person name="Price C."/>
            <person name="Rabbinowitsch E."/>
            <person name="Rutter S."/>
            <person name="Sanders M."/>
            <person name="Saunders D."/>
            <person name="Seeger K."/>
            <person name="Sharp S."/>
            <person name="Simmonds M."/>
            <person name="Skelton J."/>
            <person name="Squares R."/>
            <person name="Squares S."/>
            <person name="Stevens K."/>
            <person name="Unwin L."/>
            <person name="Whitehead S."/>
            <person name="Barrell B.G."/>
            <person name="Maskell D.J."/>
        </authorList>
    </citation>
    <scope>NUCLEOTIDE SEQUENCE [LARGE SCALE GENOMIC DNA]</scope>
    <source>
        <strain>Tohama I / ATCC BAA-589 / NCTC 13251</strain>
    </source>
</reference>
<proteinExistence type="inferred from homology"/>
<gene>
    <name evidence="1" type="primary">rsmG</name>
    <name type="ordered locus">BP0002</name>
</gene>
<feature type="chain" id="PRO_0000184224" description="Ribosomal RNA small subunit methyltransferase G">
    <location>
        <begin position="1"/>
        <end position="230"/>
    </location>
</feature>
<feature type="binding site" evidence="1">
    <location>
        <position position="93"/>
    </location>
    <ligand>
        <name>S-adenosyl-L-methionine</name>
        <dbReference type="ChEBI" id="CHEBI:59789"/>
    </ligand>
</feature>
<feature type="binding site" evidence="1">
    <location>
        <position position="98"/>
    </location>
    <ligand>
        <name>S-adenosyl-L-methionine</name>
        <dbReference type="ChEBI" id="CHEBI:59789"/>
    </ligand>
</feature>
<feature type="binding site" evidence="1">
    <location>
        <begin position="144"/>
        <end position="145"/>
    </location>
    <ligand>
        <name>S-adenosyl-L-methionine</name>
        <dbReference type="ChEBI" id="CHEBI:59789"/>
    </ligand>
</feature>
<feature type="binding site" evidence="1">
    <location>
        <position position="158"/>
    </location>
    <ligand>
        <name>S-adenosyl-L-methionine</name>
        <dbReference type="ChEBI" id="CHEBI:59789"/>
    </ligand>
</feature>
<accession>Q7W0S9</accession>
<protein>
    <recommendedName>
        <fullName evidence="1">Ribosomal RNA small subunit methyltransferase G</fullName>
        <ecNumber evidence="1">2.1.1.170</ecNumber>
    </recommendedName>
    <alternativeName>
        <fullName evidence="1">16S rRNA 7-methylguanosine methyltransferase</fullName>
        <shortName evidence="1">16S rRNA m7G methyltransferase</shortName>
    </alternativeName>
</protein>
<evidence type="ECO:0000255" key="1">
    <source>
        <dbReference type="HAMAP-Rule" id="MF_00074"/>
    </source>
</evidence>
<name>RSMG_BORPE</name>
<sequence>MSAVPDIPGGPAQRLAQACDALRLPADAGQQQKLLRYIEQMQRWNRTYNLTAIRDPGQMLVQHLFDSLSVVAPLERGLPAAGSGARVKLFDVGSGGGLPGVVLAIMRAHWDVTCVDAVEKKTAFVRQMAGALGLPNLQAAHTRIEQLEPAQCDVVISRAFASLQDFAKLAGRHVREGGTLVAMKGKVPDDEIQALQQHGHWTVERIEPLVVPALDAQRCLIWMRRSQGNI</sequence>
<comment type="function">
    <text evidence="1">Specifically methylates the N7 position of guanine in position 527 of 16S rRNA.</text>
</comment>
<comment type="catalytic activity">
    <reaction evidence="1">
        <text>guanosine(527) in 16S rRNA + S-adenosyl-L-methionine = N(7)-methylguanosine(527) in 16S rRNA + S-adenosyl-L-homocysteine</text>
        <dbReference type="Rhea" id="RHEA:42732"/>
        <dbReference type="Rhea" id="RHEA-COMP:10209"/>
        <dbReference type="Rhea" id="RHEA-COMP:10210"/>
        <dbReference type="ChEBI" id="CHEBI:57856"/>
        <dbReference type="ChEBI" id="CHEBI:59789"/>
        <dbReference type="ChEBI" id="CHEBI:74269"/>
        <dbReference type="ChEBI" id="CHEBI:74480"/>
        <dbReference type="EC" id="2.1.1.170"/>
    </reaction>
</comment>
<comment type="subcellular location">
    <subcellularLocation>
        <location evidence="1">Cytoplasm</location>
    </subcellularLocation>
</comment>
<comment type="similarity">
    <text evidence="1">Belongs to the methyltransferase superfamily. RNA methyltransferase RsmG family.</text>
</comment>
<dbReference type="EC" id="2.1.1.170" evidence="1"/>
<dbReference type="EMBL" id="BX640411">
    <property type="protein sequence ID" value="CAE40382.1"/>
    <property type="molecule type" value="Genomic_DNA"/>
</dbReference>
<dbReference type="RefSeq" id="NP_878921.1">
    <property type="nucleotide sequence ID" value="NC_002929.2"/>
</dbReference>
<dbReference type="RefSeq" id="WP_003806878.1">
    <property type="nucleotide sequence ID" value="NZ_CP039022.1"/>
</dbReference>
<dbReference type="SMR" id="Q7W0S9"/>
<dbReference type="STRING" id="257313.BP0002"/>
<dbReference type="PaxDb" id="257313-BP0002"/>
<dbReference type="GeneID" id="93206227"/>
<dbReference type="KEGG" id="bpe:BP0002"/>
<dbReference type="PATRIC" id="fig|257313.5.peg.2"/>
<dbReference type="eggNOG" id="COG0357">
    <property type="taxonomic scope" value="Bacteria"/>
</dbReference>
<dbReference type="HOGENOM" id="CLU_065341_2_0_4"/>
<dbReference type="Proteomes" id="UP000002676">
    <property type="component" value="Chromosome"/>
</dbReference>
<dbReference type="GO" id="GO:0005829">
    <property type="term" value="C:cytosol"/>
    <property type="evidence" value="ECO:0007669"/>
    <property type="project" value="TreeGrafter"/>
</dbReference>
<dbReference type="GO" id="GO:0070043">
    <property type="term" value="F:rRNA (guanine-N7-)-methyltransferase activity"/>
    <property type="evidence" value="ECO:0007669"/>
    <property type="project" value="UniProtKB-UniRule"/>
</dbReference>
<dbReference type="Gene3D" id="3.40.50.150">
    <property type="entry name" value="Vaccinia Virus protein VP39"/>
    <property type="match status" value="1"/>
</dbReference>
<dbReference type="HAMAP" id="MF_00074">
    <property type="entry name" value="16SrRNA_methyltr_G"/>
    <property type="match status" value="1"/>
</dbReference>
<dbReference type="InterPro" id="IPR003682">
    <property type="entry name" value="rRNA_ssu_MeTfrase_G"/>
</dbReference>
<dbReference type="InterPro" id="IPR029063">
    <property type="entry name" value="SAM-dependent_MTases_sf"/>
</dbReference>
<dbReference type="NCBIfam" id="TIGR00138">
    <property type="entry name" value="rsmG_gidB"/>
    <property type="match status" value="1"/>
</dbReference>
<dbReference type="PANTHER" id="PTHR31760">
    <property type="entry name" value="S-ADENOSYL-L-METHIONINE-DEPENDENT METHYLTRANSFERASES SUPERFAMILY PROTEIN"/>
    <property type="match status" value="1"/>
</dbReference>
<dbReference type="PANTHER" id="PTHR31760:SF0">
    <property type="entry name" value="S-ADENOSYL-L-METHIONINE-DEPENDENT METHYLTRANSFERASES SUPERFAMILY PROTEIN"/>
    <property type="match status" value="1"/>
</dbReference>
<dbReference type="Pfam" id="PF02527">
    <property type="entry name" value="GidB"/>
    <property type="match status" value="1"/>
</dbReference>
<dbReference type="PIRSF" id="PIRSF003078">
    <property type="entry name" value="GidB"/>
    <property type="match status" value="1"/>
</dbReference>
<dbReference type="SUPFAM" id="SSF53335">
    <property type="entry name" value="S-adenosyl-L-methionine-dependent methyltransferases"/>
    <property type="match status" value="1"/>
</dbReference>
<keyword id="KW-0963">Cytoplasm</keyword>
<keyword id="KW-0489">Methyltransferase</keyword>
<keyword id="KW-1185">Reference proteome</keyword>
<keyword id="KW-0698">rRNA processing</keyword>
<keyword id="KW-0949">S-adenosyl-L-methionine</keyword>
<keyword id="KW-0808">Transferase</keyword>
<organism>
    <name type="scientific">Bordetella pertussis (strain Tohama I / ATCC BAA-589 / NCTC 13251)</name>
    <dbReference type="NCBI Taxonomy" id="257313"/>
    <lineage>
        <taxon>Bacteria</taxon>
        <taxon>Pseudomonadati</taxon>
        <taxon>Pseudomonadota</taxon>
        <taxon>Betaproteobacteria</taxon>
        <taxon>Burkholderiales</taxon>
        <taxon>Alcaligenaceae</taxon>
        <taxon>Bordetella</taxon>
    </lineage>
</organism>